<reference key="1">
    <citation type="journal article" date="1982" name="Cell">
        <title>Cuticle protein genes of Drosophila: structure, organization and evolution of four clustered genes.</title>
        <authorList>
            <person name="Snyder M."/>
            <person name="Hunkapiller M."/>
            <person name="Yuen D."/>
            <person name="Silvert D."/>
            <person name="Fristrom J."/>
            <person name="Davidson N."/>
        </authorList>
    </citation>
    <scope>NUCLEOTIDE SEQUENCE [GENOMIC DNA]</scope>
    <scope>PARTIAL PROTEIN SEQUENCE</scope>
    <source>
        <strain>Canton-S</strain>
        <strain>Oregon-R</strain>
        <tissue>Larva</tissue>
    </source>
</reference>
<reference key="2">
    <citation type="journal article" date="2000" name="Science">
        <title>The genome sequence of Drosophila melanogaster.</title>
        <authorList>
            <person name="Adams M.D."/>
            <person name="Celniker S.E."/>
            <person name="Holt R.A."/>
            <person name="Evans C.A."/>
            <person name="Gocayne J.D."/>
            <person name="Amanatides P.G."/>
            <person name="Scherer S.E."/>
            <person name="Li P.W."/>
            <person name="Hoskins R.A."/>
            <person name="Galle R.F."/>
            <person name="George R.A."/>
            <person name="Lewis S.E."/>
            <person name="Richards S."/>
            <person name="Ashburner M."/>
            <person name="Henderson S.N."/>
            <person name="Sutton G.G."/>
            <person name="Wortman J.R."/>
            <person name="Yandell M.D."/>
            <person name="Zhang Q."/>
            <person name="Chen L.X."/>
            <person name="Brandon R.C."/>
            <person name="Rogers Y.-H.C."/>
            <person name="Blazej R.G."/>
            <person name="Champe M."/>
            <person name="Pfeiffer B.D."/>
            <person name="Wan K.H."/>
            <person name="Doyle C."/>
            <person name="Baxter E.G."/>
            <person name="Helt G."/>
            <person name="Nelson C.R."/>
            <person name="Miklos G.L.G."/>
            <person name="Abril J.F."/>
            <person name="Agbayani A."/>
            <person name="An H.-J."/>
            <person name="Andrews-Pfannkoch C."/>
            <person name="Baldwin D."/>
            <person name="Ballew R.M."/>
            <person name="Basu A."/>
            <person name="Baxendale J."/>
            <person name="Bayraktaroglu L."/>
            <person name="Beasley E.M."/>
            <person name="Beeson K.Y."/>
            <person name="Benos P.V."/>
            <person name="Berman B.P."/>
            <person name="Bhandari D."/>
            <person name="Bolshakov S."/>
            <person name="Borkova D."/>
            <person name="Botchan M.R."/>
            <person name="Bouck J."/>
            <person name="Brokstein P."/>
            <person name="Brottier P."/>
            <person name="Burtis K.C."/>
            <person name="Busam D.A."/>
            <person name="Butler H."/>
            <person name="Cadieu E."/>
            <person name="Center A."/>
            <person name="Chandra I."/>
            <person name="Cherry J.M."/>
            <person name="Cawley S."/>
            <person name="Dahlke C."/>
            <person name="Davenport L.B."/>
            <person name="Davies P."/>
            <person name="de Pablos B."/>
            <person name="Delcher A."/>
            <person name="Deng Z."/>
            <person name="Mays A.D."/>
            <person name="Dew I."/>
            <person name="Dietz S.M."/>
            <person name="Dodson K."/>
            <person name="Doup L.E."/>
            <person name="Downes M."/>
            <person name="Dugan-Rocha S."/>
            <person name="Dunkov B.C."/>
            <person name="Dunn P."/>
            <person name="Durbin K.J."/>
            <person name="Evangelista C.C."/>
            <person name="Ferraz C."/>
            <person name="Ferriera S."/>
            <person name="Fleischmann W."/>
            <person name="Fosler C."/>
            <person name="Gabrielian A.E."/>
            <person name="Garg N.S."/>
            <person name="Gelbart W.M."/>
            <person name="Glasser K."/>
            <person name="Glodek A."/>
            <person name="Gong F."/>
            <person name="Gorrell J.H."/>
            <person name="Gu Z."/>
            <person name="Guan P."/>
            <person name="Harris M."/>
            <person name="Harris N.L."/>
            <person name="Harvey D.A."/>
            <person name="Heiman T.J."/>
            <person name="Hernandez J.R."/>
            <person name="Houck J."/>
            <person name="Hostin D."/>
            <person name="Houston K.A."/>
            <person name="Howland T.J."/>
            <person name="Wei M.-H."/>
            <person name="Ibegwam C."/>
            <person name="Jalali M."/>
            <person name="Kalush F."/>
            <person name="Karpen G.H."/>
            <person name="Ke Z."/>
            <person name="Kennison J.A."/>
            <person name="Ketchum K.A."/>
            <person name="Kimmel B.E."/>
            <person name="Kodira C.D."/>
            <person name="Kraft C.L."/>
            <person name="Kravitz S."/>
            <person name="Kulp D."/>
            <person name="Lai Z."/>
            <person name="Lasko P."/>
            <person name="Lei Y."/>
            <person name="Levitsky A.A."/>
            <person name="Li J.H."/>
            <person name="Li Z."/>
            <person name="Liang Y."/>
            <person name="Lin X."/>
            <person name="Liu X."/>
            <person name="Mattei B."/>
            <person name="McIntosh T.C."/>
            <person name="McLeod M.P."/>
            <person name="McPherson D."/>
            <person name="Merkulov G."/>
            <person name="Milshina N.V."/>
            <person name="Mobarry C."/>
            <person name="Morris J."/>
            <person name="Moshrefi A."/>
            <person name="Mount S.M."/>
            <person name="Moy M."/>
            <person name="Murphy B."/>
            <person name="Murphy L."/>
            <person name="Muzny D.M."/>
            <person name="Nelson D.L."/>
            <person name="Nelson D.R."/>
            <person name="Nelson K.A."/>
            <person name="Nixon K."/>
            <person name="Nusskern D.R."/>
            <person name="Pacleb J.M."/>
            <person name="Palazzolo M."/>
            <person name="Pittman G.S."/>
            <person name="Pan S."/>
            <person name="Pollard J."/>
            <person name="Puri V."/>
            <person name="Reese M.G."/>
            <person name="Reinert K."/>
            <person name="Remington K."/>
            <person name="Saunders R.D.C."/>
            <person name="Scheeler F."/>
            <person name="Shen H."/>
            <person name="Shue B.C."/>
            <person name="Siden-Kiamos I."/>
            <person name="Simpson M."/>
            <person name="Skupski M.P."/>
            <person name="Smith T.J."/>
            <person name="Spier E."/>
            <person name="Spradling A.C."/>
            <person name="Stapleton M."/>
            <person name="Strong R."/>
            <person name="Sun E."/>
            <person name="Svirskas R."/>
            <person name="Tector C."/>
            <person name="Turner R."/>
            <person name="Venter E."/>
            <person name="Wang A.H."/>
            <person name="Wang X."/>
            <person name="Wang Z.-Y."/>
            <person name="Wassarman D.A."/>
            <person name="Weinstock G.M."/>
            <person name="Weissenbach J."/>
            <person name="Williams S.M."/>
            <person name="Woodage T."/>
            <person name="Worley K.C."/>
            <person name="Wu D."/>
            <person name="Yang S."/>
            <person name="Yao Q.A."/>
            <person name="Ye J."/>
            <person name="Yeh R.-F."/>
            <person name="Zaveri J.S."/>
            <person name="Zhan M."/>
            <person name="Zhang G."/>
            <person name="Zhao Q."/>
            <person name="Zheng L."/>
            <person name="Zheng X.H."/>
            <person name="Zhong F.N."/>
            <person name="Zhong W."/>
            <person name="Zhou X."/>
            <person name="Zhu S.C."/>
            <person name="Zhu X."/>
            <person name="Smith H.O."/>
            <person name="Gibbs R.A."/>
            <person name="Myers E.W."/>
            <person name="Rubin G.M."/>
            <person name="Venter J.C."/>
        </authorList>
    </citation>
    <scope>NUCLEOTIDE SEQUENCE [LARGE SCALE GENOMIC DNA]</scope>
    <source>
        <strain>Berkeley</strain>
    </source>
</reference>
<reference key="3">
    <citation type="journal article" date="2002" name="Genome Biol.">
        <title>Annotation of the Drosophila melanogaster euchromatic genome: a systematic review.</title>
        <authorList>
            <person name="Misra S."/>
            <person name="Crosby M.A."/>
            <person name="Mungall C.J."/>
            <person name="Matthews B.B."/>
            <person name="Campbell K.S."/>
            <person name="Hradecky P."/>
            <person name="Huang Y."/>
            <person name="Kaminker J.S."/>
            <person name="Millburn G.H."/>
            <person name="Prochnik S.E."/>
            <person name="Smith C.D."/>
            <person name="Tupy J.L."/>
            <person name="Whitfield E.J."/>
            <person name="Bayraktaroglu L."/>
            <person name="Berman B.P."/>
            <person name="Bettencourt B.R."/>
            <person name="Celniker S.E."/>
            <person name="de Grey A.D.N.J."/>
            <person name="Drysdale R.A."/>
            <person name="Harris N.L."/>
            <person name="Richter J."/>
            <person name="Russo S."/>
            <person name="Schroeder A.J."/>
            <person name="Shu S.Q."/>
            <person name="Stapleton M."/>
            <person name="Yamada C."/>
            <person name="Ashburner M."/>
            <person name="Gelbart W.M."/>
            <person name="Rubin G.M."/>
            <person name="Lewis S.E."/>
        </authorList>
    </citation>
    <scope>GENOME REANNOTATION</scope>
    <source>
        <strain>Berkeley</strain>
    </source>
</reference>
<reference key="4">
    <citation type="submission" date="2009-02" db="EMBL/GenBank/DDBJ databases">
        <authorList>
            <person name="Carlson J.W."/>
            <person name="Booth B."/>
            <person name="Frise E."/>
            <person name="Park S."/>
            <person name="Wan K.H."/>
            <person name="Yu C."/>
            <person name="Celniker S.E."/>
        </authorList>
    </citation>
    <scope>NUCLEOTIDE SEQUENCE [LARGE SCALE MRNA]</scope>
    <source>
        <strain>Berkeley</strain>
        <tissue>Larva</tissue>
        <tissue>Pupae</tissue>
    </source>
</reference>
<name>LCP2_DROME</name>
<comment type="function">
    <text>Component of the larval cuticle.</text>
</comment>
<comment type="sequence caution" evidence="2">
    <conflict type="erroneous initiation">
        <sequence resource="EMBL-CDS" id="ACN12154"/>
    </conflict>
</comment>
<gene>
    <name type="primary">Lcp2</name>
    <name type="ORF">CG8697</name>
</gene>
<evidence type="ECO:0000255" key="1">
    <source>
        <dbReference type="PROSITE-ProRule" id="PRU00497"/>
    </source>
</evidence>
<evidence type="ECO:0000305" key="2"/>
<accession>P07187</accession>
<accession>C0HBT8</accession>
<accession>Q9V4T0</accession>
<protein>
    <recommendedName>
        <fullName>Larval cuticle protein 2</fullName>
    </recommendedName>
    <alternativeName>
        <fullName>Larval cuticle protein II</fullName>
    </alternativeName>
</protein>
<feature type="signal peptide">
    <location>
        <begin position="1"/>
        <end position="16"/>
    </location>
</feature>
<feature type="chain" id="PRO_0000006389" description="Larval cuticle protein 2">
    <location>
        <begin position="17"/>
        <end position="126"/>
    </location>
</feature>
<feature type="domain" description="Chitin-binding type R&amp;R" evidence="1">
    <location>
        <begin position="39"/>
        <end position="100"/>
    </location>
</feature>
<keyword id="KW-0193">Cuticle</keyword>
<keyword id="KW-0903">Direct protein sequencing</keyword>
<keyword id="KW-1185">Reference proteome</keyword>
<keyword id="KW-0732">Signal</keyword>
<sequence length="126" mass="13488">MFKFVMILAVVGVATALAPVSRSDDVHADVLSRSDDVRADGFDSSLHTSNGIEQAASGDAHGNIHGNFGWISPEGEHVEVKYVANENGYQPSGAWIPTPPPIPEAIARAVAWLESHPPAPEHPRHH</sequence>
<organism>
    <name type="scientific">Drosophila melanogaster</name>
    <name type="common">Fruit fly</name>
    <dbReference type="NCBI Taxonomy" id="7227"/>
    <lineage>
        <taxon>Eukaryota</taxon>
        <taxon>Metazoa</taxon>
        <taxon>Ecdysozoa</taxon>
        <taxon>Arthropoda</taxon>
        <taxon>Hexapoda</taxon>
        <taxon>Insecta</taxon>
        <taxon>Pterygota</taxon>
        <taxon>Neoptera</taxon>
        <taxon>Endopterygota</taxon>
        <taxon>Diptera</taxon>
        <taxon>Brachycera</taxon>
        <taxon>Muscomorpha</taxon>
        <taxon>Ephydroidea</taxon>
        <taxon>Drosophilidae</taxon>
        <taxon>Drosophila</taxon>
        <taxon>Sophophora</taxon>
    </lineage>
</organism>
<dbReference type="EMBL" id="V00203">
    <property type="protein sequence ID" value="CAA23488.1"/>
    <property type="molecule type" value="Genomic_DNA"/>
</dbReference>
<dbReference type="EMBL" id="AE013599">
    <property type="protein sequence ID" value="AAF59095.2"/>
    <property type="molecule type" value="Genomic_DNA"/>
</dbReference>
<dbReference type="EMBL" id="BT059794">
    <property type="protein sequence ID" value="ACN12154.1"/>
    <property type="status" value="ALT_INIT"/>
    <property type="molecule type" value="mRNA"/>
</dbReference>
<dbReference type="PIR" id="B25299">
    <property type="entry name" value="B25299"/>
</dbReference>
<dbReference type="RefSeq" id="NP_001260802.1">
    <property type="nucleotide sequence ID" value="NM_001273873.2"/>
</dbReference>
<dbReference type="RefSeq" id="NP_476620.1">
    <property type="nucleotide sequence ID" value="NM_057272.4"/>
</dbReference>
<dbReference type="BioGRID" id="61671">
    <property type="interactions" value="27"/>
</dbReference>
<dbReference type="DIP" id="DIP-18187N"/>
<dbReference type="FunCoup" id="P07187">
    <property type="interactions" value="22"/>
</dbReference>
<dbReference type="IntAct" id="P07187">
    <property type="interactions" value="6"/>
</dbReference>
<dbReference type="STRING" id="7227.FBpp0305734"/>
<dbReference type="PaxDb" id="7227-FBpp0305734"/>
<dbReference type="DNASU" id="35818"/>
<dbReference type="EnsemblMetazoa" id="FBtr0088761">
    <property type="protein sequence ID" value="FBpp0087840"/>
    <property type="gene ID" value="FBgn0002533"/>
</dbReference>
<dbReference type="EnsemblMetazoa" id="FBtr0333556">
    <property type="protein sequence ID" value="FBpp0305734"/>
    <property type="gene ID" value="FBgn0002533"/>
</dbReference>
<dbReference type="GeneID" id="35818"/>
<dbReference type="KEGG" id="dme:Dmel_CG8697"/>
<dbReference type="AGR" id="FB:FBgn0002533"/>
<dbReference type="CTD" id="3937"/>
<dbReference type="FlyBase" id="FBgn0002533">
    <property type="gene designation" value="Lcp2"/>
</dbReference>
<dbReference type="VEuPathDB" id="VectorBase:FBgn0002533"/>
<dbReference type="eggNOG" id="ENOG502T8XY">
    <property type="taxonomic scope" value="Eukaryota"/>
</dbReference>
<dbReference type="GeneTree" id="ENSGT00900000141325"/>
<dbReference type="HOGENOM" id="CLU_065450_3_1_1"/>
<dbReference type="InParanoid" id="P07187"/>
<dbReference type="OMA" id="AYGNIHG"/>
<dbReference type="OrthoDB" id="6343684at2759"/>
<dbReference type="PhylomeDB" id="P07187"/>
<dbReference type="BioGRID-ORCS" id="35818">
    <property type="hits" value="0 hits in 1 CRISPR screen"/>
</dbReference>
<dbReference type="GenomeRNAi" id="35818"/>
<dbReference type="PRO" id="PR:P07187"/>
<dbReference type="Proteomes" id="UP000000803">
    <property type="component" value="Chromosome 2R"/>
</dbReference>
<dbReference type="Bgee" id="FBgn0002533">
    <property type="expression patterns" value="Expressed in larva and 7 other cell types or tissues"/>
</dbReference>
<dbReference type="ExpressionAtlas" id="P07187">
    <property type="expression patterns" value="baseline and differential"/>
</dbReference>
<dbReference type="GO" id="GO:0062129">
    <property type="term" value="C:chitin-based extracellular matrix"/>
    <property type="evidence" value="ECO:0000314"/>
    <property type="project" value="FlyBase"/>
</dbReference>
<dbReference type="GO" id="GO:0008010">
    <property type="term" value="F:structural constituent of chitin-based larval cuticle"/>
    <property type="evidence" value="ECO:0000314"/>
    <property type="project" value="FlyBase"/>
</dbReference>
<dbReference type="GO" id="GO:0040003">
    <property type="term" value="P:chitin-based cuticle development"/>
    <property type="evidence" value="ECO:0000255"/>
    <property type="project" value="FlyBase"/>
</dbReference>
<dbReference type="GO" id="GO:0008363">
    <property type="term" value="P:larval chitin-based cuticle development"/>
    <property type="evidence" value="ECO:0000305"/>
    <property type="project" value="FlyBase"/>
</dbReference>
<dbReference type="InterPro" id="IPR031311">
    <property type="entry name" value="CHIT_BIND_RR_consensus"/>
</dbReference>
<dbReference type="InterPro" id="IPR050468">
    <property type="entry name" value="Cuticle_Struct_Prot"/>
</dbReference>
<dbReference type="InterPro" id="IPR000618">
    <property type="entry name" value="Insect_cuticle"/>
</dbReference>
<dbReference type="PANTHER" id="PTHR10380">
    <property type="entry name" value="CUTICLE PROTEIN"/>
    <property type="match status" value="1"/>
</dbReference>
<dbReference type="PANTHER" id="PTHR10380:SF237">
    <property type="entry name" value="CUTICULAR PROTEIN 65AU, ISOFORM A-RELATED"/>
    <property type="match status" value="1"/>
</dbReference>
<dbReference type="Pfam" id="PF00379">
    <property type="entry name" value="Chitin_bind_4"/>
    <property type="match status" value="1"/>
</dbReference>
<dbReference type="PROSITE" id="PS00233">
    <property type="entry name" value="CHIT_BIND_RR_1"/>
    <property type="match status" value="1"/>
</dbReference>
<dbReference type="PROSITE" id="PS51155">
    <property type="entry name" value="CHIT_BIND_RR_2"/>
    <property type="match status" value="1"/>
</dbReference>
<proteinExistence type="evidence at protein level"/>